<reference key="1">
    <citation type="submission" date="2008-02" db="EMBL/GenBank/DDBJ databases">
        <title>A 6x draft sequence assembly of the Pongo pygmaeus abelii genome.</title>
        <authorList>
            <person name="Wilson R.K."/>
            <person name="Mardis E."/>
        </authorList>
    </citation>
    <scope>NUCLEOTIDE SEQUENCE [LARGE SCALE GENOMIC DNA]</scope>
</reference>
<reference key="2">
    <citation type="submission" date="2004-11" db="EMBL/GenBank/DDBJ databases">
        <authorList>
            <consortium name="The German cDNA consortium"/>
        </authorList>
    </citation>
    <scope>NUCLEOTIDE SEQUENCE [LARGE SCALE MRNA] OF 1-77</scope>
    <source>
        <tissue>Brain cortex</tissue>
    </source>
</reference>
<name>SPIN3_PONAB</name>
<keyword id="KW-1185">Reference proteome</keyword>
<evidence type="ECO:0000250" key="1">
    <source>
        <dbReference type="UniProtKB" id="Q5JUX0"/>
    </source>
</evidence>
<evidence type="ECO:0000250" key="2">
    <source>
        <dbReference type="UniProtKB" id="Q9Y657"/>
    </source>
</evidence>
<evidence type="ECO:0000255" key="3"/>
<evidence type="ECO:0000256" key="4">
    <source>
        <dbReference type="SAM" id="MobiDB-lite"/>
    </source>
</evidence>
<evidence type="ECO:0000305" key="5"/>
<proteinExistence type="evidence at transcript level"/>
<organism>
    <name type="scientific">Pongo abelii</name>
    <name type="common">Sumatran orangutan</name>
    <name type="synonym">Pongo pygmaeus abelii</name>
    <dbReference type="NCBI Taxonomy" id="9601"/>
    <lineage>
        <taxon>Eukaryota</taxon>
        <taxon>Metazoa</taxon>
        <taxon>Chordata</taxon>
        <taxon>Craniata</taxon>
        <taxon>Vertebrata</taxon>
        <taxon>Euteleostomi</taxon>
        <taxon>Mammalia</taxon>
        <taxon>Eutheria</taxon>
        <taxon>Euarchontoglires</taxon>
        <taxon>Primates</taxon>
        <taxon>Haplorrhini</taxon>
        <taxon>Catarrhini</taxon>
        <taxon>Hominidae</taxon>
        <taxon>Pongo</taxon>
    </lineage>
</organism>
<gene>
    <name type="primary">SPIN3</name>
</gene>
<feature type="chain" id="PRO_0000259592" description="Spindlin-3">
    <location>
        <begin position="1"/>
        <end position="258"/>
    </location>
</feature>
<feature type="region of interest" description="Disordered" evidence="4">
    <location>
        <begin position="1"/>
        <end position="23"/>
    </location>
</feature>
<feature type="region of interest" description="Tudor-like domain 1" evidence="3">
    <location>
        <begin position="50"/>
        <end position="99"/>
    </location>
</feature>
<feature type="region of interest" description="Tudor-like domain 2" evidence="3">
    <location>
        <begin position="129"/>
        <end position="178"/>
    </location>
</feature>
<feature type="region of interest" description="Histone H3K4me3 and H3R8me2a binding" evidence="2">
    <location>
        <position position="138"/>
    </location>
</feature>
<feature type="region of interest" description="Tudor-like domain 3" evidence="3">
    <location>
        <begin position="210"/>
        <end position="255"/>
    </location>
</feature>
<feature type="region of interest" description="Histone H3K4me3 and H3R8me2a binding" evidence="2">
    <location>
        <begin position="246"/>
        <end position="248"/>
    </location>
</feature>
<feature type="site" description="Histone H3K4me3 and H3R8me2a binding" evidence="2">
    <location>
        <position position="169"/>
    </location>
</feature>
<feature type="site" description="Histone H3K4me3 and H3R8me2a binding" evidence="2">
    <location>
        <position position="176"/>
    </location>
</feature>
<feature type="site" description="Histone H3K4me3 and H3R8me2a binding" evidence="2">
    <location>
        <position position="180"/>
    </location>
</feature>
<feature type="sequence conflict" description="In Ref. 2; CAH91093." evidence="5" ref="2">
    <original>R</original>
    <variation>G</variation>
    <location>
        <position position="15"/>
    </location>
</feature>
<feature type="sequence conflict" description="In Ref. 2; CAH91093." evidence="5" ref="2">
    <original>VP</original>
    <variation>LL</variation>
    <location>
        <begin position="76"/>
        <end position="77"/>
    </location>
</feature>
<comment type="function">
    <text evidence="1">Exhibits H3K4me3-binding activity.</text>
</comment>
<comment type="subunit">
    <text evidence="1">Interacts with C11orf84/SPINDOC.</text>
</comment>
<comment type="similarity">
    <text evidence="5">Belongs to the SPIN/STSY family.</text>
</comment>
<sequence>MKTPFGKAAAGQRSRTGAGHGSVSVTMIKRKAAHKKHRSRPTSQPRRNIVGCRIQHGWKDGDEPLTQWKGTVLDQVPVNPSLYLIKYDGFDCVYGLELHRDERVSSLEVLPNRVASSRISDTHLAEIMVGKAVEHIFETEEGSKNEWRGMVLAQAPVMNTWFYITYEKDPVLYMYQLLDDYKDGDLRILQDSNDSPLAEREPGEVIDSLVGKQVEYAKDDGSKRTGMVIHQVEAKPSVYFIKFDDDFHIYVYDLVKTS</sequence>
<protein>
    <recommendedName>
        <fullName>Spindlin-3</fullName>
    </recommendedName>
    <alternativeName>
        <fullName>Spindlin-like protein 3</fullName>
        <shortName>SPIN-3</shortName>
    </alternativeName>
</protein>
<dbReference type="EMBL" id="ABGA01017836">
    <property type="status" value="NOT_ANNOTATED_CDS"/>
    <property type="molecule type" value="Genomic_DNA"/>
</dbReference>
<dbReference type="EMBL" id="CR858894">
    <property type="protein sequence ID" value="CAH91093.1"/>
    <property type="molecule type" value="mRNA"/>
</dbReference>
<dbReference type="RefSeq" id="NP_001125637.1">
    <property type="nucleotide sequence ID" value="NM_001132165.1"/>
</dbReference>
<dbReference type="SMR" id="Q5RAW7"/>
<dbReference type="FunCoup" id="Q5RAW7">
    <property type="interactions" value="424"/>
</dbReference>
<dbReference type="STRING" id="9601.ENSPPYP00000022837"/>
<dbReference type="Ensembl" id="ENSPPYT00000037538.1">
    <property type="protein sequence ID" value="ENSPPYP00000031536.1"/>
    <property type="gene ID" value="ENSPPYG00000034066.1"/>
</dbReference>
<dbReference type="GeneID" id="100172555"/>
<dbReference type="KEGG" id="pon:100172555"/>
<dbReference type="CTD" id="169981"/>
<dbReference type="eggNOG" id="ENOG502QRYD">
    <property type="taxonomic scope" value="Eukaryota"/>
</dbReference>
<dbReference type="GeneTree" id="ENSGT00950000182925"/>
<dbReference type="InParanoid" id="Q5RAW7"/>
<dbReference type="OMA" id="QICETIC"/>
<dbReference type="OrthoDB" id="9624126at2759"/>
<dbReference type="TreeFam" id="TF332665"/>
<dbReference type="Proteomes" id="UP000001595">
    <property type="component" value="Chromosome X"/>
</dbReference>
<dbReference type="GO" id="GO:0140002">
    <property type="term" value="F:histone H3K4me3 reader activity"/>
    <property type="evidence" value="ECO:0000250"/>
    <property type="project" value="UniProtKB"/>
</dbReference>
<dbReference type="GO" id="GO:0035064">
    <property type="term" value="F:methylated histone binding"/>
    <property type="evidence" value="ECO:0007669"/>
    <property type="project" value="UniProtKB-ARBA"/>
</dbReference>
<dbReference type="GO" id="GO:0007276">
    <property type="term" value="P:gamete generation"/>
    <property type="evidence" value="ECO:0007669"/>
    <property type="project" value="InterPro"/>
</dbReference>
<dbReference type="FunFam" id="2.80.10.70:FF:000001">
    <property type="entry name" value="Spindlin 1"/>
    <property type="match status" value="1"/>
</dbReference>
<dbReference type="Gene3D" id="2.80.10.70">
    <property type="entry name" value="Spindlin/Ssty"/>
    <property type="match status" value="1"/>
</dbReference>
<dbReference type="InterPro" id="IPR003671">
    <property type="entry name" value="SPIN/Ssty"/>
</dbReference>
<dbReference type="InterPro" id="IPR042567">
    <property type="entry name" value="SPIN/Ssty_sf"/>
</dbReference>
<dbReference type="PANTHER" id="PTHR10405">
    <property type="entry name" value="SPINDLIN"/>
    <property type="match status" value="1"/>
</dbReference>
<dbReference type="Pfam" id="PF02513">
    <property type="entry name" value="Spin-Ssty"/>
    <property type="match status" value="3"/>
</dbReference>
<accession>Q5RAW7</accession>
<accession>H2PVT5</accession>